<gene>
    <name evidence="7" type="primary">mlc-5</name>
    <name evidence="7" type="ORF">T12D8.6</name>
</gene>
<reference evidence="6" key="1">
    <citation type="journal article" date="1998" name="Science">
        <title>Genome sequence of the nematode C. elegans: a platform for investigating biology.</title>
        <authorList>
            <consortium name="The C. elegans sequencing consortium"/>
        </authorList>
    </citation>
    <scope>NUCLEOTIDE SEQUENCE [LARGE SCALE GENOMIC DNA]</scope>
    <source>
        <strain evidence="6">Bristol N2</strain>
    </source>
</reference>
<reference evidence="4" key="2">
    <citation type="journal article" date="2009" name="Development">
        <title>Myosin II regulation during C. elegans embryonic elongation: LET-502/ROCK, MRCK-1 and PAK-1, three kinases with different roles.</title>
        <authorList>
            <person name="Gally C."/>
            <person name="Wissler F."/>
            <person name="Zahreddine H."/>
            <person name="Quintin S."/>
            <person name="Landmann F."/>
            <person name="Labouesse M."/>
        </authorList>
    </citation>
    <scope>FUNCTION</scope>
    <scope>SUBUNIT</scope>
    <scope>SUBCELLULAR LOCATION</scope>
    <scope>DEVELOPMENTAL STAGE</scope>
    <scope>DISRUPTION PHENOTYPE</scope>
</reference>
<dbReference type="EMBL" id="Z81120">
    <property type="protein sequence ID" value="CAB03346.1"/>
    <property type="molecule type" value="Genomic_DNA"/>
</dbReference>
<dbReference type="PIR" id="T24862">
    <property type="entry name" value="T24862"/>
</dbReference>
<dbReference type="RefSeq" id="NP_499813.1">
    <property type="nucleotide sequence ID" value="NM_067412.10"/>
</dbReference>
<dbReference type="SMR" id="Q9XVI9"/>
<dbReference type="FunCoup" id="Q9XVI9">
    <property type="interactions" value="1098"/>
</dbReference>
<dbReference type="IntAct" id="Q9XVI9">
    <property type="interactions" value="1"/>
</dbReference>
<dbReference type="STRING" id="6239.T12D8.6.1"/>
<dbReference type="PaxDb" id="6239-T12D8.6.2"/>
<dbReference type="PeptideAtlas" id="Q9XVI9"/>
<dbReference type="EnsemblMetazoa" id="T12D8.6.1">
    <property type="protein sequence ID" value="T12D8.6.1"/>
    <property type="gene ID" value="WBGene00011734"/>
</dbReference>
<dbReference type="GeneID" id="176796"/>
<dbReference type="KEGG" id="cel:CELE_T12D8.6"/>
<dbReference type="UCSC" id="T12D8.6.1">
    <property type="organism name" value="c. elegans"/>
</dbReference>
<dbReference type="AGR" id="WB:WBGene00011734"/>
<dbReference type="CTD" id="176796"/>
<dbReference type="WormBase" id="T12D8.6">
    <property type="protein sequence ID" value="CE16403"/>
    <property type="gene ID" value="WBGene00011734"/>
    <property type="gene designation" value="mlc-5"/>
</dbReference>
<dbReference type="eggNOG" id="KOG0030">
    <property type="taxonomic scope" value="Eukaryota"/>
</dbReference>
<dbReference type="GeneTree" id="ENSGT01030000234570"/>
<dbReference type="HOGENOM" id="CLU_061288_2_0_1"/>
<dbReference type="InParanoid" id="Q9XVI9"/>
<dbReference type="OMA" id="ECREVFC"/>
<dbReference type="OrthoDB" id="5959761at2759"/>
<dbReference type="PhylomeDB" id="Q9XVI9"/>
<dbReference type="Reactome" id="R-CEL-445355">
    <property type="pathway name" value="Smooth Muscle Contraction"/>
</dbReference>
<dbReference type="Reactome" id="R-CEL-5627123">
    <property type="pathway name" value="RHO GTPases activate PAKs"/>
</dbReference>
<dbReference type="PRO" id="PR:Q9XVI9"/>
<dbReference type="Proteomes" id="UP000001940">
    <property type="component" value="Chromosome III"/>
</dbReference>
<dbReference type="Bgee" id="WBGene00011734">
    <property type="expression patterns" value="Expressed in pharyngeal muscle cell (C elegans) and 4 other cell types or tissues"/>
</dbReference>
<dbReference type="GO" id="GO:0015629">
    <property type="term" value="C:actin cytoskeleton"/>
    <property type="evidence" value="ECO:0000314"/>
    <property type="project" value="WormBase"/>
</dbReference>
<dbReference type="GO" id="GO:0005737">
    <property type="term" value="C:cytoplasm"/>
    <property type="evidence" value="ECO:0007669"/>
    <property type="project" value="UniProtKB-SubCell"/>
</dbReference>
<dbReference type="GO" id="GO:0016460">
    <property type="term" value="C:myosin II complex"/>
    <property type="evidence" value="ECO:0000318"/>
    <property type="project" value="GO_Central"/>
</dbReference>
<dbReference type="GO" id="GO:0005509">
    <property type="term" value="F:calcium ion binding"/>
    <property type="evidence" value="ECO:0007669"/>
    <property type="project" value="InterPro"/>
</dbReference>
<dbReference type="GO" id="GO:0000281">
    <property type="term" value="P:mitotic cytokinesis"/>
    <property type="evidence" value="ECO:0000315"/>
    <property type="project" value="WormBase"/>
</dbReference>
<dbReference type="CDD" id="cd00051">
    <property type="entry name" value="EFh"/>
    <property type="match status" value="1"/>
</dbReference>
<dbReference type="FunFam" id="1.10.238.10:FF:000356">
    <property type="entry name" value="Myosin II light chain"/>
    <property type="match status" value="1"/>
</dbReference>
<dbReference type="FunFam" id="1.10.238.10:FF:000082">
    <property type="entry name" value="Myosin light chain 1"/>
    <property type="match status" value="1"/>
</dbReference>
<dbReference type="Gene3D" id="1.10.238.10">
    <property type="entry name" value="EF-hand"/>
    <property type="match status" value="2"/>
</dbReference>
<dbReference type="InterPro" id="IPR050230">
    <property type="entry name" value="CALM/Myosin/TropC-like"/>
</dbReference>
<dbReference type="InterPro" id="IPR011992">
    <property type="entry name" value="EF-hand-dom_pair"/>
</dbReference>
<dbReference type="InterPro" id="IPR002048">
    <property type="entry name" value="EF_hand_dom"/>
</dbReference>
<dbReference type="PANTHER" id="PTHR23048:SF49">
    <property type="entry name" value="FI08416P-RELATED"/>
    <property type="match status" value="1"/>
</dbReference>
<dbReference type="PANTHER" id="PTHR23048">
    <property type="entry name" value="MYOSIN LIGHT CHAIN 1, 3"/>
    <property type="match status" value="1"/>
</dbReference>
<dbReference type="Pfam" id="PF13499">
    <property type="entry name" value="EF-hand_7"/>
    <property type="match status" value="1"/>
</dbReference>
<dbReference type="SMART" id="SM00054">
    <property type="entry name" value="EFh"/>
    <property type="match status" value="2"/>
</dbReference>
<dbReference type="SUPFAM" id="SSF47473">
    <property type="entry name" value="EF-hand"/>
    <property type="match status" value="1"/>
</dbReference>
<dbReference type="PROSITE" id="PS50222">
    <property type="entry name" value="EF_HAND_2"/>
    <property type="match status" value="2"/>
</dbReference>
<feature type="chain" id="PRO_0000432386" description="Myosin-2 essential light chain">
    <location>
        <begin position="1"/>
        <end position="142"/>
    </location>
</feature>
<feature type="domain" description="EF-hand 1" evidence="1">
    <location>
        <begin position="2"/>
        <end position="37"/>
    </location>
</feature>
<feature type="domain" description="EF-hand 2" evidence="1">
    <location>
        <begin position="75"/>
        <end position="110"/>
    </location>
</feature>
<sequence>MDDLADCREVFAYFDSKGDERISVQQVGDVLRALGQNPTEAEIHKCVGSFDREARLSFEDFVPIFQSVSKNREKHTVEEFVEGLSHFDKEGNGMINVAELRHLLTTLGERLSDEDVDQLLSGHNDSHGNVNISDFVRAVMNS</sequence>
<accession>Q9XVI9</accession>
<keyword id="KW-0131">Cell cycle</keyword>
<keyword id="KW-0132">Cell division</keyword>
<keyword id="KW-0963">Cytoplasm</keyword>
<keyword id="KW-0206">Cytoskeleton</keyword>
<keyword id="KW-0505">Motor protein</keyword>
<keyword id="KW-0518">Myosin</keyword>
<keyword id="KW-1185">Reference proteome</keyword>
<keyword id="KW-0677">Repeat</keyword>
<comment type="function">
    <text evidence="2">Required for cytokinesis and embryo elongation. May regulate myosin II complex formation and/or the association of myosin with actin. May be involved in the organization of mlc-4 and nmy-2 into bundles.</text>
</comment>
<comment type="subunit">
    <text evidence="5">Myosin is a hexamer of 2 heavy chains and 4 light chains (two regulatory light chains and two essential light chains).</text>
</comment>
<comment type="subcellular location">
    <subcellularLocation>
        <location evidence="2">Cytoplasm</location>
    </subcellularLocation>
    <subcellularLocation>
        <location evidence="2">Cytoplasm</location>
        <location evidence="2">Cytoskeleton</location>
    </subcellularLocation>
    <text evidence="2">Forms a filamentous structure during 2-fold embryonic stage which may co-localize with actin and whose formation may be regulated by mlc-4.</text>
</comment>
<comment type="developmental stage">
    <text evidence="2">Expressed during embryogenesis in seam cells as well as in the dorsal and ventral hypodermal cells where it co-localizes with actin bundles.</text>
</comment>
<comment type="disruption phenotype">
    <text evidence="2">Arrest at the 1-cell stage embryo due to a cytokinesis defect characterized by a failure to form a contractile ring.</text>
</comment>
<proteinExistence type="evidence at protein level"/>
<name>MLC5_CAEEL</name>
<organism evidence="6">
    <name type="scientific">Caenorhabditis elegans</name>
    <dbReference type="NCBI Taxonomy" id="6239"/>
    <lineage>
        <taxon>Eukaryota</taxon>
        <taxon>Metazoa</taxon>
        <taxon>Ecdysozoa</taxon>
        <taxon>Nematoda</taxon>
        <taxon>Chromadorea</taxon>
        <taxon>Rhabditida</taxon>
        <taxon>Rhabditina</taxon>
        <taxon>Rhabditomorpha</taxon>
        <taxon>Rhabditoidea</taxon>
        <taxon>Rhabditidae</taxon>
        <taxon>Peloderinae</taxon>
        <taxon>Caenorhabditis</taxon>
    </lineage>
</organism>
<evidence type="ECO:0000255" key="1">
    <source>
        <dbReference type="PROSITE-ProRule" id="PRU00448"/>
    </source>
</evidence>
<evidence type="ECO:0000269" key="2">
    <source>
    </source>
</evidence>
<evidence type="ECO:0000303" key="3">
    <source>
    </source>
</evidence>
<evidence type="ECO:0000305" key="4"/>
<evidence type="ECO:0000305" key="5">
    <source>
    </source>
</evidence>
<evidence type="ECO:0000312" key="6">
    <source>
        <dbReference type="Proteomes" id="UP000001940"/>
    </source>
</evidence>
<evidence type="ECO:0000312" key="7">
    <source>
        <dbReference type="WormBase" id="T12D8.6"/>
    </source>
</evidence>
<protein>
    <recommendedName>
        <fullName evidence="3">Myosin-2 essential light chain</fullName>
    </recommendedName>
</protein>